<reference key="1">
    <citation type="journal article" date="2010" name="J. Bacteriol.">
        <title>Complete genome sequence of Beijerinckia indica subsp. indica.</title>
        <authorList>
            <person name="Tamas I."/>
            <person name="Dedysh S.N."/>
            <person name="Liesack W."/>
            <person name="Stott M.B."/>
            <person name="Alam M."/>
            <person name="Murrell J.C."/>
            <person name="Dunfield P.F."/>
        </authorList>
    </citation>
    <scope>NUCLEOTIDE SEQUENCE [LARGE SCALE GENOMIC DNA]</scope>
    <source>
        <strain>ATCC 9039 / DSM 1715 / NCIMB 8712</strain>
    </source>
</reference>
<sequence>MSALDTAPAGSLAETHAQRGTRAVAFWLWSLAVLVFLMVVLGGATRLTESGLSITEWKPISGALPPLSAEAWQAEFENYKRIPQYAALFPDMDLAGFKFIFFFEWSHRLLGRLIGVATALPLLFFWLRGRLPEGYRLKLLGLLALGGLQGFVGWWMVKSGLSDRVEVAQERLAIHLILASLTFCFIVWLAASLRKRPREISPSKASGLAWGAGLILLAILVQIGLGALVAGLRAGRAYNTWPLIEGNFLPPVESLTLLTPLWRNFVDNLLTVQFQHRMVAYLVLGLTLLQVFWTSGTLGSGRATKRAIALLGLVLAQVILGILTLVLVVPLWAGLLHQAFAMLVLGMAVAHLQALSQGR</sequence>
<proteinExistence type="inferred from homology"/>
<protein>
    <recommendedName>
        <fullName evidence="1">Heme A synthase</fullName>
        <shortName evidence="1">HAS</shortName>
        <ecNumber evidence="1">1.17.99.9</ecNumber>
    </recommendedName>
    <alternativeName>
        <fullName evidence="1">Cytochrome aa3-controlling protein</fullName>
    </alternativeName>
</protein>
<organism>
    <name type="scientific">Beijerinckia indica subsp. indica (strain ATCC 9039 / DSM 1715 / NCIMB 8712)</name>
    <dbReference type="NCBI Taxonomy" id="395963"/>
    <lineage>
        <taxon>Bacteria</taxon>
        <taxon>Pseudomonadati</taxon>
        <taxon>Pseudomonadota</taxon>
        <taxon>Alphaproteobacteria</taxon>
        <taxon>Hyphomicrobiales</taxon>
        <taxon>Beijerinckiaceae</taxon>
        <taxon>Beijerinckia</taxon>
    </lineage>
</organism>
<feature type="chain" id="PRO_0000349016" description="Heme A synthase">
    <location>
        <begin position="1"/>
        <end position="359"/>
    </location>
</feature>
<feature type="transmembrane region" description="Helical" evidence="1">
    <location>
        <begin position="23"/>
        <end position="43"/>
    </location>
</feature>
<feature type="transmembrane region" description="Helical" evidence="1">
    <location>
        <begin position="85"/>
        <end position="105"/>
    </location>
</feature>
<feature type="transmembrane region" description="Helical" evidence="1">
    <location>
        <begin position="109"/>
        <end position="129"/>
    </location>
</feature>
<feature type="transmembrane region" description="Helical" evidence="1">
    <location>
        <begin position="137"/>
        <end position="157"/>
    </location>
</feature>
<feature type="transmembrane region" description="Helical" evidence="1">
    <location>
        <begin position="172"/>
        <end position="192"/>
    </location>
</feature>
<feature type="transmembrane region" description="Helical" evidence="1">
    <location>
        <begin position="212"/>
        <end position="232"/>
    </location>
</feature>
<feature type="transmembrane region" description="Helical" evidence="1">
    <location>
        <begin position="278"/>
        <end position="298"/>
    </location>
</feature>
<feature type="transmembrane region" description="Helical" evidence="1">
    <location>
        <begin position="308"/>
        <end position="328"/>
    </location>
</feature>
<feature type="transmembrane region" description="Helical" evidence="1">
    <location>
        <begin position="329"/>
        <end position="349"/>
    </location>
</feature>
<feature type="binding site" description="axial binding residue" evidence="1">
    <location>
        <position position="276"/>
    </location>
    <ligand>
        <name>heme</name>
        <dbReference type="ChEBI" id="CHEBI:30413"/>
    </ligand>
    <ligandPart>
        <name>Fe</name>
        <dbReference type="ChEBI" id="CHEBI:18248"/>
    </ligandPart>
</feature>
<feature type="binding site" description="axial binding residue" evidence="1">
    <location>
        <position position="337"/>
    </location>
    <ligand>
        <name>heme</name>
        <dbReference type="ChEBI" id="CHEBI:30413"/>
    </ligand>
    <ligandPart>
        <name>Fe</name>
        <dbReference type="ChEBI" id="CHEBI:18248"/>
    </ligandPart>
</feature>
<comment type="function">
    <text evidence="1">Catalyzes the conversion of heme O to heme A by two successive hydroxylations of the methyl group at C8. The first hydroxylation forms heme I, the second hydroxylation results in an unstable dihydroxymethyl group, which spontaneously dehydrates, resulting in the formyl group of heme A.</text>
</comment>
<comment type="catalytic activity">
    <reaction evidence="1">
        <text>Fe(II)-heme o + 2 A + H2O = Fe(II)-heme a + 2 AH2</text>
        <dbReference type="Rhea" id="RHEA:63388"/>
        <dbReference type="ChEBI" id="CHEBI:13193"/>
        <dbReference type="ChEBI" id="CHEBI:15377"/>
        <dbReference type="ChEBI" id="CHEBI:17499"/>
        <dbReference type="ChEBI" id="CHEBI:60530"/>
        <dbReference type="ChEBI" id="CHEBI:61715"/>
        <dbReference type="EC" id="1.17.99.9"/>
    </reaction>
    <physiologicalReaction direction="left-to-right" evidence="1">
        <dbReference type="Rhea" id="RHEA:63389"/>
    </physiologicalReaction>
</comment>
<comment type="cofactor">
    <cofactor evidence="1">
        <name>heme b</name>
        <dbReference type="ChEBI" id="CHEBI:60344"/>
    </cofactor>
</comment>
<comment type="pathway">
    <text evidence="1">Porphyrin-containing compound metabolism; heme A biosynthesis; heme A from heme O: step 1/1.</text>
</comment>
<comment type="subunit">
    <text evidence="1">Interacts with CtaB.</text>
</comment>
<comment type="subcellular location">
    <subcellularLocation>
        <location evidence="1">Cell membrane</location>
        <topology evidence="1">Multi-pass membrane protein</topology>
    </subcellularLocation>
</comment>
<comment type="similarity">
    <text evidence="1">Belongs to the COX15/CtaA family. Type 2 subfamily.</text>
</comment>
<name>CTAA_BEII9</name>
<evidence type="ECO:0000255" key="1">
    <source>
        <dbReference type="HAMAP-Rule" id="MF_01665"/>
    </source>
</evidence>
<accession>B2IH44</accession>
<gene>
    <name evidence="1" type="primary">ctaA</name>
    <name type="ordered locus">Bind_0808</name>
</gene>
<dbReference type="EC" id="1.17.99.9" evidence="1"/>
<dbReference type="EMBL" id="CP001016">
    <property type="protein sequence ID" value="ACB94458.1"/>
    <property type="molecule type" value="Genomic_DNA"/>
</dbReference>
<dbReference type="RefSeq" id="WP_012383815.1">
    <property type="nucleotide sequence ID" value="NC_010581.1"/>
</dbReference>
<dbReference type="SMR" id="B2IH44"/>
<dbReference type="STRING" id="395963.Bind_0808"/>
<dbReference type="KEGG" id="bid:Bind_0808"/>
<dbReference type="eggNOG" id="COG1612">
    <property type="taxonomic scope" value="Bacteria"/>
</dbReference>
<dbReference type="HOGENOM" id="CLU_017627_0_0_5"/>
<dbReference type="OrthoDB" id="9793156at2"/>
<dbReference type="UniPathway" id="UPA00269">
    <property type="reaction ID" value="UER00713"/>
</dbReference>
<dbReference type="Proteomes" id="UP000001695">
    <property type="component" value="Chromosome"/>
</dbReference>
<dbReference type="GO" id="GO:0005886">
    <property type="term" value="C:plasma membrane"/>
    <property type="evidence" value="ECO:0007669"/>
    <property type="project" value="UniProtKB-SubCell"/>
</dbReference>
<dbReference type="GO" id="GO:0046872">
    <property type="term" value="F:metal ion binding"/>
    <property type="evidence" value="ECO:0007669"/>
    <property type="project" value="UniProtKB-KW"/>
</dbReference>
<dbReference type="GO" id="GO:0016653">
    <property type="term" value="F:oxidoreductase activity, acting on NAD(P)H, heme protein as acceptor"/>
    <property type="evidence" value="ECO:0007669"/>
    <property type="project" value="InterPro"/>
</dbReference>
<dbReference type="GO" id="GO:0006784">
    <property type="term" value="P:heme A biosynthetic process"/>
    <property type="evidence" value="ECO:0007669"/>
    <property type="project" value="UniProtKB-UniRule"/>
</dbReference>
<dbReference type="HAMAP" id="MF_01665">
    <property type="entry name" value="HemeA_synth_type2"/>
    <property type="match status" value="1"/>
</dbReference>
<dbReference type="InterPro" id="IPR003780">
    <property type="entry name" value="COX15/CtaA_fam"/>
</dbReference>
<dbReference type="InterPro" id="IPR023754">
    <property type="entry name" value="HemeA_Synthase_type2"/>
</dbReference>
<dbReference type="PANTHER" id="PTHR23289">
    <property type="entry name" value="CYTOCHROME C OXIDASE ASSEMBLY PROTEIN COX15"/>
    <property type="match status" value="1"/>
</dbReference>
<dbReference type="PANTHER" id="PTHR23289:SF2">
    <property type="entry name" value="CYTOCHROME C OXIDASE ASSEMBLY PROTEIN COX15 HOMOLOG"/>
    <property type="match status" value="1"/>
</dbReference>
<dbReference type="Pfam" id="PF02628">
    <property type="entry name" value="COX15-CtaA"/>
    <property type="match status" value="1"/>
</dbReference>
<keyword id="KW-1003">Cell membrane</keyword>
<keyword id="KW-0350">Heme biosynthesis</keyword>
<keyword id="KW-0408">Iron</keyword>
<keyword id="KW-0472">Membrane</keyword>
<keyword id="KW-0479">Metal-binding</keyword>
<keyword id="KW-0560">Oxidoreductase</keyword>
<keyword id="KW-1185">Reference proteome</keyword>
<keyword id="KW-0812">Transmembrane</keyword>
<keyword id="KW-1133">Transmembrane helix</keyword>